<feature type="chain" id="PRO_0000134441" description="Isopentenyl-diphosphate delta-isomerase">
    <location>
        <begin position="1"/>
        <end position="345"/>
    </location>
</feature>
<feature type="binding site" evidence="1">
    <location>
        <begin position="6"/>
        <end position="7"/>
    </location>
    <ligand>
        <name>substrate</name>
    </ligand>
</feature>
<feature type="binding site" evidence="1">
    <location>
        <begin position="63"/>
        <end position="65"/>
    </location>
    <ligand>
        <name>FMN</name>
        <dbReference type="ChEBI" id="CHEBI:58210"/>
    </ligand>
</feature>
<feature type="binding site" evidence="1">
    <location>
        <begin position="93"/>
        <end position="95"/>
    </location>
    <ligand>
        <name>substrate</name>
    </ligand>
</feature>
<feature type="binding site" evidence="1">
    <location>
        <position position="93"/>
    </location>
    <ligand>
        <name>FMN</name>
        <dbReference type="ChEBI" id="CHEBI:58210"/>
    </ligand>
</feature>
<feature type="binding site" evidence="1">
    <location>
        <position position="122"/>
    </location>
    <ligand>
        <name>FMN</name>
        <dbReference type="ChEBI" id="CHEBI:58210"/>
    </ligand>
</feature>
<feature type="binding site" evidence="1">
    <location>
        <position position="156"/>
    </location>
    <ligand>
        <name>substrate</name>
    </ligand>
</feature>
<feature type="binding site" evidence="1">
    <location>
        <position position="157"/>
    </location>
    <ligand>
        <name>Mg(2+)</name>
        <dbReference type="ChEBI" id="CHEBI:18420"/>
    </ligand>
</feature>
<feature type="binding site" evidence="1">
    <location>
        <position position="188"/>
    </location>
    <ligand>
        <name>FMN</name>
        <dbReference type="ChEBI" id="CHEBI:58210"/>
    </ligand>
</feature>
<feature type="binding site" evidence="1">
    <location>
        <position position="218"/>
    </location>
    <ligand>
        <name>FMN</name>
        <dbReference type="ChEBI" id="CHEBI:58210"/>
    </ligand>
</feature>
<feature type="binding site" evidence="1">
    <location>
        <begin position="265"/>
        <end position="267"/>
    </location>
    <ligand>
        <name>FMN</name>
        <dbReference type="ChEBI" id="CHEBI:58210"/>
    </ligand>
</feature>
<feature type="binding site" evidence="1">
    <location>
        <begin position="286"/>
        <end position="287"/>
    </location>
    <ligand>
        <name>FMN</name>
        <dbReference type="ChEBI" id="CHEBI:58210"/>
    </ligand>
</feature>
<sequence>MSTSKRKIDHLKICLEEEVESGYTGLEDVMLIHKALPEVDYWKIDTEIEFFGKKLSFPLLIASMTGGHPETKEINARLGEAVEEAGIGMGVGSQRAAIEDESLADSFTVVREKAPNAFVYANIGMPQVIERGVEIVDRAVEMIDADAVAIHLNYLQEAIQPEGDLNAEKGLEVLEEVCRSVKVPVIAKETGAGISREVAVMLKRAGVSAIDVGGKGGTTFSGVEVYRVNDEVSKSVGIDFWDWGLPTAFSIVDCRGILPVIATGGLRSGLDVAKSIAIGAELGSAALPFLRAAVESAEKVREEIEYFRRGLKTAMFLTGCKNVEELKGLKVFVSGRLKEWIDFRG</sequence>
<reference key="1">
    <citation type="journal article" date="1997" name="Nature">
        <title>The complete genome sequence of the hyperthermophilic, sulphate-reducing archaeon Archaeoglobus fulgidus.</title>
        <authorList>
            <person name="Klenk H.-P."/>
            <person name="Clayton R.A."/>
            <person name="Tomb J.-F."/>
            <person name="White O."/>
            <person name="Nelson K.E."/>
            <person name="Ketchum K.A."/>
            <person name="Dodson R.J."/>
            <person name="Gwinn M.L."/>
            <person name="Hickey E.K."/>
            <person name="Peterson J.D."/>
            <person name="Richardson D.L."/>
            <person name="Kerlavage A.R."/>
            <person name="Graham D.E."/>
            <person name="Kyrpides N.C."/>
            <person name="Fleischmann R.D."/>
            <person name="Quackenbush J."/>
            <person name="Lee N.H."/>
            <person name="Sutton G.G."/>
            <person name="Gill S.R."/>
            <person name="Kirkness E.F."/>
            <person name="Dougherty B.A."/>
            <person name="McKenney K."/>
            <person name="Adams M.D."/>
            <person name="Loftus B.J."/>
            <person name="Peterson S.N."/>
            <person name="Reich C.I."/>
            <person name="McNeil L.K."/>
            <person name="Badger J.H."/>
            <person name="Glodek A."/>
            <person name="Zhou L."/>
            <person name="Overbeek R."/>
            <person name="Gocayne J.D."/>
            <person name="Weidman J.F."/>
            <person name="McDonald L.A."/>
            <person name="Utterback T.R."/>
            <person name="Cotton M.D."/>
            <person name="Spriggs T."/>
            <person name="Artiach P."/>
            <person name="Kaine B.P."/>
            <person name="Sykes S.M."/>
            <person name="Sadow P.W."/>
            <person name="D'Andrea K.P."/>
            <person name="Bowman C."/>
            <person name="Fujii C."/>
            <person name="Garland S.A."/>
            <person name="Mason T.M."/>
            <person name="Olsen G.J."/>
            <person name="Fraser C.M."/>
            <person name="Smith H.O."/>
            <person name="Woese C.R."/>
            <person name="Venter J.C."/>
        </authorList>
    </citation>
    <scope>NUCLEOTIDE SEQUENCE [LARGE SCALE GENOMIC DNA]</scope>
    <source>
        <strain>ATCC 49558 / DSM 4304 / JCM 9628 / NBRC 100126 / VC-16</strain>
    </source>
</reference>
<keyword id="KW-0963">Cytoplasm</keyword>
<keyword id="KW-0285">Flavoprotein</keyword>
<keyword id="KW-0288">FMN</keyword>
<keyword id="KW-0413">Isomerase</keyword>
<keyword id="KW-0414">Isoprene biosynthesis</keyword>
<keyword id="KW-0460">Magnesium</keyword>
<keyword id="KW-0479">Metal-binding</keyword>
<keyword id="KW-0521">NADP</keyword>
<keyword id="KW-1185">Reference proteome</keyword>
<proteinExistence type="inferred from homology"/>
<name>IDI2_ARCFU</name>
<evidence type="ECO:0000255" key="1">
    <source>
        <dbReference type="HAMAP-Rule" id="MF_00354"/>
    </source>
</evidence>
<evidence type="ECO:0000305" key="2"/>
<gene>
    <name evidence="1" type="primary">fni</name>
    <name type="ordered locus">AF_2287</name>
</gene>
<accession>O27997</accession>
<organism>
    <name type="scientific">Archaeoglobus fulgidus (strain ATCC 49558 / DSM 4304 / JCM 9628 / NBRC 100126 / VC-16)</name>
    <dbReference type="NCBI Taxonomy" id="224325"/>
    <lineage>
        <taxon>Archaea</taxon>
        <taxon>Methanobacteriati</taxon>
        <taxon>Methanobacteriota</taxon>
        <taxon>Archaeoglobi</taxon>
        <taxon>Archaeoglobales</taxon>
        <taxon>Archaeoglobaceae</taxon>
        <taxon>Archaeoglobus</taxon>
    </lineage>
</organism>
<dbReference type="EC" id="5.3.3.2" evidence="1"/>
<dbReference type="EMBL" id="AE000782">
    <property type="protein sequence ID" value="AAB88970.1"/>
    <property type="status" value="ALT_INIT"/>
    <property type="molecule type" value="Genomic_DNA"/>
</dbReference>
<dbReference type="PIR" id="G69535">
    <property type="entry name" value="G69535"/>
</dbReference>
<dbReference type="RefSeq" id="WP_048064552.1">
    <property type="nucleotide sequence ID" value="NC_000917.1"/>
</dbReference>
<dbReference type="SMR" id="O27997"/>
<dbReference type="STRING" id="224325.AF_2287"/>
<dbReference type="PaxDb" id="224325-AF_2287"/>
<dbReference type="EnsemblBacteria" id="AAB88970">
    <property type="protein sequence ID" value="AAB88970"/>
    <property type="gene ID" value="AF_2287"/>
</dbReference>
<dbReference type="GeneID" id="1485519"/>
<dbReference type="KEGG" id="afu:AF_2287"/>
<dbReference type="eggNOG" id="arCOG00613">
    <property type="taxonomic scope" value="Archaea"/>
</dbReference>
<dbReference type="HOGENOM" id="CLU_065515_1_0_2"/>
<dbReference type="OrthoDB" id="371955at2157"/>
<dbReference type="PhylomeDB" id="O27997"/>
<dbReference type="Proteomes" id="UP000002199">
    <property type="component" value="Chromosome"/>
</dbReference>
<dbReference type="GO" id="GO:0005737">
    <property type="term" value="C:cytoplasm"/>
    <property type="evidence" value="ECO:0007669"/>
    <property type="project" value="UniProtKB-SubCell"/>
</dbReference>
<dbReference type="GO" id="GO:0010181">
    <property type="term" value="F:FMN binding"/>
    <property type="evidence" value="ECO:0007669"/>
    <property type="project" value="UniProtKB-UniRule"/>
</dbReference>
<dbReference type="GO" id="GO:0004452">
    <property type="term" value="F:isopentenyl-diphosphate delta-isomerase activity"/>
    <property type="evidence" value="ECO:0007669"/>
    <property type="project" value="UniProtKB-UniRule"/>
</dbReference>
<dbReference type="GO" id="GO:0000287">
    <property type="term" value="F:magnesium ion binding"/>
    <property type="evidence" value="ECO:0007669"/>
    <property type="project" value="UniProtKB-UniRule"/>
</dbReference>
<dbReference type="GO" id="GO:0070402">
    <property type="term" value="F:NADPH binding"/>
    <property type="evidence" value="ECO:0007669"/>
    <property type="project" value="UniProtKB-UniRule"/>
</dbReference>
<dbReference type="GO" id="GO:0016491">
    <property type="term" value="F:oxidoreductase activity"/>
    <property type="evidence" value="ECO:0007669"/>
    <property type="project" value="InterPro"/>
</dbReference>
<dbReference type="GO" id="GO:0008299">
    <property type="term" value="P:isoprenoid biosynthetic process"/>
    <property type="evidence" value="ECO:0007669"/>
    <property type="project" value="UniProtKB-UniRule"/>
</dbReference>
<dbReference type="CDD" id="cd02811">
    <property type="entry name" value="IDI-2_FMN"/>
    <property type="match status" value="1"/>
</dbReference>
<dbReference type="Gene3D" id="3.20.20.70">
    <property type="entry name" value="Aldolase class I"/>
    <property type="match status" value="1"/>
</dbReference>
<dbReference type="HAMAP" id="MF_00354">
    <property type="entry name" value="Idi_2"/>
    <property type="match status" value="1"/>
</dbReference>
<dbReference type="InterPro" id="IPR013785">
    <property type="entry name" value="Aldolase_TIM"/>
</dbReference>
<dbReference type="InterPro" id="IPR000262">
    <property type="entry name" value="FMN-dep_DH"/>
</dbReference>
<dbReference type="InterPro" id="IPR011179">
    <property type="entry name" value="IPdP_isomerase"/>
</dbReference>
<dbReference type="NCBIfam" id="TIGR02151">
    <property type="entry name" value="IPP_isom_2"/>
    <property type="match status" value="1"/>
</dbReference>
<dbReference type="PANTHER" id="PTHR43665">
    <property type="entry name" value="ISOPENTENYL-DIPHOSPHATE DELTA-ISOMERASE"/>
    <property type="match status" value="1"/>
</dbReference>
<dbReference type="PANTHER" id="PTHR43665:SF1">
    <property type="entry name" value="ISOPENTENYL-DIPHOSPHATE DELTA-ISOMERASE"/>
    <property type="match status" value="1"/>
</dbReference>
<dbReference type="Pfam" id="PF01070">
    <property type="entry name" value="FMN_dh"/>
    <property type="match status" value="1"/>
</dbReference>
<dbReference type="PIRSF" id="PIRSF003314">
    <property type="entry name" value="IPP_isomerase"/>
    <property type="match status" value="1"/>
</dbReference>
<dbReference type="SMART" id="SM01240">
    <property type="entry name" value="IMPDH"/>
    <property type="match status" value="1"/>
</dbReference>
<dbReference type="SUPFAM" id="SSF51395">
    <property type="entry name" value="FMN-linked oxidoreductases"/>
    <property type="match status" value="1"/>
</dbReference>
<protein>
    <recommendedName>
        <fullName evidence="1">Isopentenyl-diphosphate delta-isomerase</fullName>
        <shortName evidence="1">IPP isomerase</shortName>
        <ecNumber evidence="1">5.3.3.2</ecNumber>
    </recommendedName>
    <alternativeName>
        <fullName evidence="1">Isopentenyl diphosphate:dimethylallyl diphosphate isomerase</fullName>
    </alternativeName>
    <alternativeName>
        <fullName evidence="1">Isopentenyl pyrophosphate isomerase</fullName>
    </alternativeName>
    <alternativeName>
        <fullName evidence="1">Type 2 isopentenyl diphosphate isomerase</fullName>
        <shortName evidence="1">IDI-2</shortName>
    </alternativeName>
</protein>
<comment type="function">
    <text evidence="1">Involved in the biosynthesis of isoprenoids. Catalyzes the 1,3-allylic rearrangement of the homoallylic substrate isopentenyl (IPP) to its allylic isomer, dimethylallyl diphosphate (DMAPP).</text>
</comment>
<comment type="catalytic activity">
    <reaction evidence="1">
        <text>isopentenyl diphosphate = dimethylallyl diphosphate</text>
        <dbReference type="Rhea" id="RHEA:23284"/>
        <dbReference type="ChEBI" id="CHEBI:57623"/>
        <dbReference type="ChEBI" id="CHEBI:128769"/>
        <dbReference type="EC" id="5.3.3.2"/>
    </reaction>
</comment>
<comment type="cofactor">
    <cofactor evidence="1">
        <name>FMN</name>
        <dbReference type="ChEBI" id="CHEBI:58210"/>
    </cofactor>
</comment>
<comment type="cofactor">
    <cofactor evidence="1">
        <name>NADPH</name>
        <dbReference type="ChEBI" id="CHEBI:57783"/>
    </cofactor>
</comment>
<comment type="cofactor">
    <cofactor evidence="1">
        <name>Mg(2+)</name>
        <dbReference type="ChEBI" id="CHEBI:18420"/>
    </cofactor>
</comment>
<comment type="subunit">
    <text evidence="1">Homooctamer. Dimer of tetramers.</text>
</comment>
<comment type="subcellular location">
    <subcellularLocation>
        <location evidence="1">Cytoplasm</location>
    </subcellularLocation>
</comment>
<comment type="similarity">
    <text evidence="1">Belongs to the IPP isomerase type 2 family.</text>
</comment>
<comment type="sequence caution" evidence="2">
    <conflict type="erroneous initiation">
        <sequence resource="EMBL-CDS" id="AAB88970"/>
    </conflict>
    <text>Truncated N-terminus.</text>
</comment>